<reference key="1">
    <citation type="journal article" date="1996" name="Science">
        <title>Complete genome sequence of the methanogenic archaeon, Methanococcus jannaschii.</title>
        <authorList>
            <person name="Bult C.J."/>
            <person name="White O."/>
            <person name="Olsen G.J."/>
            <person name="Zhou L."/>
            <person name="Fleischmann R.D."/>
            <person name="Sutton G.G."/>
            <person name="Blake J.A."/>
            <person name="FitzGerald L.M."/>
            <person name="Clayton R.A."/>
            <person name="Gocayne J.D."/>
            <person name="Kerlavage A.R."/>
            <person name="Dougherty B.A."/>
            <person name="Tomb J.-F."/>
            <person name="Adams M.D."/>
            <person name="Reich C.I."/>
            <person name="Overbeek R."/>
            <person name="Kirkness E.F."/>
            <person name="Weinstock K.G."/>
            <person name="Merrick J.M."/>
            <person name="Glodek A."/>
            <person name="Scott J.L."/>
            <person name="Geoghagen N.S.M."/>
            <person name="Weidman J.F."/>
            <person name="Fuhrmann J.L."/>
            <person name="Nguyen D."/>
            <person name="Utterback T.R."/>
            <person name="Kelley J.M."/>
            <person name="Peterson J.D."/>
            <person name="Sadow P.W."/>
            <person name="Hanna M.C."/>
            <person name="Cotton M.D."/>
            <person name="Roberts K.M."/>
            <person name="Hurst M.A."/>
            <person name="Kaine B.P."/>
            <person name="Borodovsky M."/>
            <person name="Klenk H.-P."/>
            <person name="Fraser C.M."/>
            <person name="Smith H.O."/>
            <person name="Woese C.R."/>
            <person name="Venter J.C."/>
        </authorList>
    </citation>
    <scope>NUCLEOTIDE SEQUENCE [LARGE SCALE GENOMIC DNA]</scope>
    <source>
        <strain>ATCC 43067 / DSM 2661 / JAL-1 / JCM 10045 / NBRC 100440</strain>
    </source>
</reference>
<feature type="chain" id="PRO_0000102014" description="Probable ATP-dependent helicase MJ1401">
    <location>
        <begin position="1"/>
        <end position="808"/>
    </location>
</feature>
<feature type="domain" description="Helicase ATP-binding" evidence="1">
    <location>
        <begin position="221"/>
        <end position="391"/>
    </location>
</feature>
<feature type="domain" description="Helicase C-terminal" evidence="2">
    <location>
        <begin position="396"/>
        <end position="585"/>
    </location>
</feature>
<feature type="short sequence motif" description="Q motif">
    <location>
        <begin position="189"/>
        <end position="217"/>
    </location>
</feature>
<feature type="short sequence motif" description="DEIH box">
    <location>
        <begin position="336"/>
        <end position="339"/>
    </location>
</feature>
<feature type="binding site" evidence="1">
    <location>
        <begin position="234"/>
        <end position="241"/>
    </location>
    <ligand>
        <name>ATP</name>
        <dbReference type="ChEBI" id="CHEBI:30616"/>
    </ligand>
</feature>
<keyword id="KW-0067">ATP-binding</keyword>
<keyword id="KW-0347">Helicase</keyword>
<keyword id="KW-0378">Hydrolase</keyword>
<keyword id="KW-0547">Nucleotide-binding</keyword>
<keyword id="KW-1185">Reference proteome</keyword>
<comment type="similarity">
    <text evidence="3">Belongs to the DEAD box helicase family.</text>
</comment>
<proteinExistence type="inferred from homology"/>
<dbReference type="EC" id="3.6.4.-"/>
<dbReference type="EMBL" id="L77117">
    <property type="protein sequence ID" value="AAB99409.1"/>
    <property type="molecule type" value="Genomic_DNA"/>
</dbReference>
<dbReference type="PIR" id="H64474">
    <property type="entry name" value="H64474"/>
</dbReference>
<dbReference type="RefSeq" id="WP_010870918.1">
    <property type="nucleotide sequence ID" value="NC_000909.1"/>
</dbReference>
<dbReference type="SMR" id="Q58796"/>
<dbReference type="FunCoup" id="Q58796">
    <property type="interactions" value="72"/>
</dbReference>
<dbReference type="STRING" id="243232.MJ_1401"/>
<dbReference type="PaxDb" id="243232-MJ_1401"/>
<dbReference type="EnsemblBacteria" id="AAB99409">
    <property type="protein sequence ID" value="AAB99409"/>
    <property type="gene ID" value="MJ_1401"/>
</dbReference>
<dbReference type="GeneID" id="1452304"/>
<dbReference type="KEGG" id="mja:MJ_1401"/>
<dbReference type="eggNOG" id="arCOG00554">
    <property type="taxonomic scope" value="Archaea"/>
</dbReference>
<dbReference type="HOGENOM" id="CLU_010611_0_0_2"/>
<dbReference type="InParanoid" id="Q58796"/>
<dbReference type="OrthoDB" id="39583at2157"/>
<dbReference type="PhylomeDB" id="Q58796"/>
<dbReference type="Proteomes" id="UP000000805">
    <property type="component" value="Chromosome"/>
</dbReference>
<dbReference type="GO" id="GO:0005524">
    <property type="term" value="F:ATP binding"/>
    <property type="evidence" value="ECO:0007669"/>
    <property type="project" value="UniProtKB-KW"/>
</dbReference>
<dbReference type="GO" id="GO:0140097">
    <property type="term" value="F:catalytic activity, acting on DNA"/>
    <property type="evidence" value="ECO:0007669"/>
    <property type="project" value="UniProtKB-ARBA"/>
</dbReference>
<dbReference type="GO" id="GO:0004386">
    <property type="term" value="F:helicase activity"/>
    <property type="evidence" value="ECO:0007669"/>
    <property type="project" value="UniProtKB-KW"/>
</dbReference>
<dbReference type="GO" id="GO:0016787">
    <property type="term" value="F:hydrolase activity"/>
    <property type="evidence" value="ECO:0007669"/>
    <property type="project" value="UniProtKB-KW"/>
</dbReference>
<dbReference type="GO" id="GO:0003676">
    <property type="term" value="F:nucleic acid binding"/>
    <property type="evidence" value="ECO:0007669"/>
    <property type="project" value="InterPro"/>
</dbReference>
<dbReference type="CDD" id="cd18795">
    <property type="entry name" value="SF2_C_Ski2"/>
    <property type="match status" value="1"/>
</dbReference>
<dbReference type="Gene3D" id="1.10.3380.30">
    <property type="match status" value="1"/>
</dbReference>
<dbReference type="Gene3D" id="3.40.50.300">
    <property type="entry name" value="P-loop containing nucleotide triphosphate hydrolases"/>
    <property type="match status" value="2"/>
</dbReference>
<dbReference type="InterPro" id="IPR011545">
    <property type="entry name" value="DEAD/DEAH_box_helicase_dom"/>
</dbReference>
<dbReference type="InterPro" id="IPR043852">
    <property type="entry name" value="DUF5814"/>
</dbReference>
<dbReference type="InterPro" id="IPR050474">
    <property type="entry name" value="Hel308_SKI2-like"/>
</dbReference>
<dbReference type="InterPro" id="IPR014001">
    <property type="entry name" value="Helicase_ATP-bd"/>
</dbReference>
<dbReference type="InterPro" id="IPR001650">
    <property type="entry name" value="Helicase_C-like"/>
</dbReference>
<dbReference type="InterPro" id="IPR027417">
    <property type="entry name" value="P-loop_NTPase"/>
</dbReference>
<dbReference type="PANTHER" id="PTHR47961:SF1">
    <property type="entry name" value="ATP-DEPENDENT HELICASE MJ1401-RELATED"/>
    <property type="match status" value="1"/>
</dbReference>
<dbReference type="PANTHER" id="PTHR47961">
    <property type="entry name" value="DNA POLYMERASE THETA, PUTATIVE (AFU_ORTHOLOGUE AFUA_1G05260)-RELATED"/>
    <property type="match status" value="1"/>
</dbReference>
<dbReference type="Pfam" id="PF00270">
    <property type="entry name" value="DEAD"/>
    <property type="match status" value="1"/>
</dbReference>
<dbReference type="Pfam" id="PF19131">
    <property type="entry name" value="DUF5814"/>
    <property type="match status" value="1"/>
</dbReference>
<dbReference type="Pfam" id="PF00271">
    <property type="entry name" value="Helicase_C"/>
    <property type="match status" value="1"/>
</dbReference>
<dbReference type="SMART" id="SM00487">
    <property type="entry name" value="DEXDc"/>
    <property type="match status" value="1"/>
</dbReference>
<dbReference type="SMART" id="SM00490">
    <property type="entry name" value="HELICc"/>
    <property type="match status" value="1"/>
</dbReference>
<dbReference type="SUPFAM" id="SSF52540">
    <property type="entry name" value="P-loop containing nucleoside triphosphate hydrolases"/>
    <property type="match status" value="1"/>
</dbReference>
<dbReference type="PROSITE" id="PS51192">
    <property type="entry name" value="HELICASE_ATP_BIND_1"/>
    <property type="match status" value="1"/>
</dbReference>
<dbReference type="PROSITE" id="PS51194">
    <property type="entry name" value="HELICASE_CTER"/>
    <property type="match status" value="1"/>
</dbReference>
<dbReference type="PROSITE" id="PS51195">
    <property type="entry name" value="Q_MOTIF"/>
    <property type="match status" value="1"/>
</dbReference>
<accession>Q58796</accession>
<organism>
    <name type="scientific">Methanocaldococcus jannaschii (strain ATCC 43067 / DSM 2661 / JAL-1 / JCM 10045 / NBRC 100440)</name>
    <name type="common">Methanococcus jannaschii</name>
    <dbReference type="NCBI Taxonomy" id="243232"/>
    <lineage>
        <taxon>Archaea</taxon>
        <taxon>Methanobacteriati</taxon>
        <taxon>Methanobacteriota</taxon>
        <taxon>Methanomada group</taxon>
        <taxon>Methanococci</taxon>
        <taxon>Methanococcales</taxon>
        <taxon>Methanocaldococcaceae</taxon>
        <taxon>Methanocaldococcus</taxon>
    </lineage>
</organism>
<protein>
    <recommendedName>
        <fullName>Probable ATP-dependent helicase MJ1401</fullName>
        <ecNumber>3.6.4.-</ecNumber>
    </recommendedName>
</protein>
<name>Y1401_METJA</name>
<gene>
    <name type="ordered locus">MJ1401</name>
</gene>
<sequence length="808" mass="92933">MLIVRKPKKKKDEIEIVKVGGKIEDGIEVKNNQKIFANYKKVGDKYKLYRCRVGDKLIQPSKVLELLKSDKIFILKENEEEIEEVLKSYNLKFDYIELCPFCLLKNIYKRLTRNNRCRYGNLEICINCGINEIKEEVKISEEFIEKFLKRFKDVDKVLSLLRIRNPLDKPELTRYDIITGSEEDKIENYKIDELDIPEELKEIIKSRGIEELLPVQTLSVKAGLLNGDDLLIISATSSGKTLIGELAGIKNLIKTGKKFLFLVPLVALANQKYLEFKERYEKLGFKVSLRVGLGRIGKKVDVETSLDADIIVGTYEGIDYLIRTKRLKDIGTVVIDEIHSLNLEERGARLDGLIGRLRFLFKEAQKIYLSATIGNPKELAKQLNAKLVLYNGRPVPLERHIIFCKNDFAKLNIIKEIVKREWQNISKFGYRGQCLIFTYSRKRAEYLAKALKSKGIKAEFYHGGMEYIKRRKVEDDFANQKIQCVVTTAALSAGVDFPASTVILESLAMGADWLNPAEFQQMCGRAGRKGMHEIGKVYLLVEIGKKYHAKMENTEDEVAFKLLNAVPEDVKVEYNEDEEEEQILATISAGITNRYDIDRVPYIGRAFSLNKILSNLESYGMIKANNDVKLTNYGSAVAISFLYPKVAEKIKEGIIENKEIIKLITEIMPFENVYLSNNLKIKLSKILNINVPSRFFDALEVIREGMEKIKDKKLKEDLTLIIMEFEGVEVEEKILEMIINLRISGKTPGQISKTLYEEFKIQTYSGDIYYYLEQLLNLLDATERIARIFNKRYAEKVKELKEKIENPK</sequence>
<evidence type="ECO:0000255" key="1">
    <source>
        <dbReference type="PROSITE-ProRule" id="PRU00541"/>
    </source>
</evidence>
<evidence type="ECO:0000255" key="2">
    <source>
        <dbReference type="PROSITE-ProRule" id="PRU00542"/>
    </source>
</evidence>
<evidence type="ECO:0000305" key="3"/>